<accession>Q83AF6</accession>
<gene>
    <name evidence="1" type="primary">atpG</name>
    <name type="ordered locus">CBU_1944</name>
</gene>
<dbReference type="EMBL" id="AE016828">
    <property type="protein sequence ID" value="AAO91434.1"/>
    <property type="molecule type" value="Genomic_DNA"/>
</dbReference>
<dbReference type="RefSeq" id="NP_820920.1">
    <property type="nucleotide sequence ID" value="NC_002971.4"/>
</dbReference>
<dbReference type="RefSeq" id="WP_010958556.1">
    <property type="nucleotide sequence ID" value="NC_002971.4"/>
</dbReference>
<dbReference type="SMR" id="Q83AF6"/>
<dbReference type="STRING" id="227377.CBU_1944"/>
<dbReference type="EnsemblBacteria" id="AAO91434">
    <property type="protein sequence ID" value="AAO91434"/>
    <property type="gene ID" value="CBU_1944"/>
</dbReference>
<dbReference type="GeneID" id="1209857"/>
<dbReference type="KEGG" id="cbu:CBU_1944"/>
<dbReference type="PATRIC" id="fig|227377.7.peg.1930"/>
<dbReference type="eggNOG" id="COG0224">
    <property type="taxonomic scope" value="Bacteria"/>
</dbReference>
<dbReference type="HOGENOM" id="CLU_050669_0_1_6"/>
<dbReference type="OrthoDB" id="9812769at2"/>
<dbReference type="Proteomes" id="UP000002671">
    <property type="component" value="Chromosome"/>
</dbReference>
<dbReference type="GO" id="GO:0005886">
    <property type="term" value="C:plasma membrane"/>
    <property type="evidence" value="ECO:0007669"/>
    <property type="project" value="UniProtKB-SubCell"/>
</dbReference>
<dbReference type="GO" id="GO:0045259">
    <property type="term" value="C:proton-transporting ATP synthase complex"/>
    <property type="evidence" value="ECO:0007669"/>
    <property type="project" value="UniProtKB-KW"/>
</dbReference>
<dbReference type="GO" id="GO:0005524">
    <property type="term" value="F:ATP binding"/>
    <property type="evidence" value="ECO:0007669"/>
    <property type="project" value="UniProtKB-UniRule"/>
</dbReference>
<dbReference type="GO" id="GO:0046933">
    <property type="term" value="F:proton-transporting ATP synthase activity, rotational mechanism"/>
    <property type="evidence" value="ECO:0007669"/>
    <property type="project" value="UniProtKB-UniRule"/>
</dbReference>
<dbReference type="GO" id="GO:0015986">
    <property type="term" value="P:proton motive force-driven ATP synthesis"/>
    <property type="evidence" value="ECO:0000318"/>
    <property type="project" value="GO_Central"/>
</dbReference>
<dbReference type="GO" id="GO:0042777">
    <property type="term" value="P:proton motive force-driven plasma membrane ATP synthesis"/>
    <property type="evidence" value="ECO:0007669"/>
    <property type="project" value="UniProtKB-UniRule"/>
</dbReference>
<dbReference type="CDD" id="cd12151">
    <property type="entry name" value="F1-ATPase_gamma"/>
    <property type="match status" value="1"/>
</dbReference>
<dbReference type="FunFam" id="1.10.287.80:FF:000005">
    <property type="entry name" value="ATP synthase gamma chain"/>
    <property type="match status" value="1"/>
</dbReference>
<dbReference type="FunFam" id="3.40.1380.10:FF:000006">
    <property type="entry name" value="ATP synthase gamma chain"/>
    <property type="match status" value="1"/>
</dbReference>
<dbReference type="Gene3D" id="3.40.1380.10">
    <property type="match status" value="1"/>
</dbReference>
<dbReference type="Gene3D" id="1.10.287.80">
    <property type="entry name" value="ATP synthase, gamma subunit, helix hairpin domain"/>
    <property type="match status" value="1"/>
</dbReference>
<dbReference type="HAMAP" id="MF_00815">
    <property type="entry name" value="ATP_synth_gamma_bact"/>
    <property type="match status" value="1"/>
</dbReference>
<dbReference type="InterPro" id="IPR035968">
    <property type="entry name" value="ATP_synth_F1_ATPase_gsu"/>
</dbReference>
<dbReference type="InterPro" id="IPR000131">
    <property type="entry name" value="ATP_synth_F1_gsu"/>
</dbReference>
<dbReference type="InterPro" id="IPR023632">
    <property type="entry name" value="ATP_synth_F1_gsu_CS"/>
</dbReference>
<dbReference type="NCBIfam" id="TIGR01146">
    <property type="entry name" value="ATPsyn_F1gamma"/>
    <property type="match status" value="1"/>
</dbReference>
<dbReference type="NCBIfam" id="NF004144">
    <property type="entry name" value="PRK05621.1-1"/>
    <property type="match status" value="1"/>
</dbReference>
<dbReference type="PANTHER" id="PTHR11693">
    <property type="entry name" value="ATP SYNTHASE GAMMA CHAIN"/>
    <property type="match status" value="1"/>
</dbReference>
<dbReference type="PANTHER" id="PTHR11693:SF22">
    <property type="entry name" value="ATP SYNTHASE SUBUNIT GAMMA, MITOCHONDRIAL"/>
    <property type="match status" value="1"/>
</dbReference>
<dbReference type="Pfam" id="PF00231">
    <property type="entry name" value="ATP-synt"/>
    <property type="match status" value="1"/>
</dbReference>
<dbReference type="PRINTS" id="PR00126">
    <property type="entry name" value="ATPASEGAMMA"/>
</dbReference>
<dbReference type="SUPFAM" id="SSF52943">
    <property type="entry name" value="ATP synthase (F1-ATPase), gamma subunit"/>
    <property type="match status" value="1"/>
</dbReference>
<dbReference type="PROSITE" id="PS00153">
    <property type="entry name" value="ATPASE_GAMMA"/>
    <property type="match status" value="1"/>
</dbReference>
<evidence type="ECO:0000255" key="1">
    <source>
        <dbReference type="HAMAP-Rule" id="MF_00815"/>
    </source>
</evidence>
<feature type="chain" id="PRO_0000073274" description="ATP synthase gamma chain">
    <location>
        <begin position="1"/>
        <end position="289"/>
    </location>
</feature>
<protein>
    <recommendedName>
        <fullName evidence="1">ATP synthase gamma chain</fullName>
    </recommendedName>
    <alternativeName>
        <fullName evidence="1">ATP synthase F1 sector gamma subunit</fullName>
    </alternativeName>
    <alternativeName>
        <fullName evidence="1">F-ATPase gamma subunit</fullName>
    </alternativeName>
</protein>
<keyword id="KW-0066">ATP synthesis</keyword>
<keyword id="KW-0997">Cell inner membrane</keyword>
<keyword id="KW-1003">Cell membrane</keyword>
<keyword id="KW-0139">CF(1)</keyword>
<keyword id="KW-0375">Hydrogen ion transport</keyword>
<keyword id="KW-0406">Ion transport</keyword>
<keyword id="KW-0472">Membrane</keyword>
<keyword id="KW-1185">Reference proteome</keyword>
<keyword id="KW-0813">Transport</keyword>
<proteinExistence type="inferred from homology"/>
<reference key="1">
    <citation type="journal article" date="2003" name="Proc. Natl. Acad. Sci. U.S.A.">
        <title>Complete genome sequence of the Q-fever pathogen, Coxiella burnetii.</title>
        <authorList>
            <person name="Seshadri R."/>
            <person name="Paulsen I.T."/>
            <person name="Eisen J.A."/>
            <person name="Read T.D."/>
            <person name="Nelson K.E."/>
            <person name="Nelson W.C."/>
            <person name="Ward N.L."/>
            <person name="Tettelin H."/>
            <person name="Davidsen T.M."/>
            <person name="Beanan M.J."/>
            <person name="DeBoy R.T."/>
            <person name="Daugherty S.C."/>
            <person name="Brinkac L.M."/>
            <person name="Madupu R."/>
            <person name="Dodson R.J."/>
            <person name="Khouri H.M."/>
            <person name="Lee K.H."/>
            <person name="Carty H.A."/>
            <person name="Scanlan D."/>
            <person name="Heinzen R.A."/>
            <person name="Thompson H.A."/>
            <person name="Samuel J.E."/>
            <person name="Fraser C.M."/>
            <person name="Heidelberg J.F."/>
        </authorList>
    </citation>
    <scope>NUCLEOTIDE SEQUENCE [LARGE SCALE GENOMIC DNA]</scope>
    <source>
        <strain>RSA 493 / Nine Mile phase I</strain>
    </source>
</reference>
<comment type="function">
    <text evidence="1">Produces ATP from ADP in the presence of a proton gradient across the membrane. The gamma chain is believed to be important in regulating ATPase activity and the flow of protons through the CF(0) complex.</text>
</comment>
<comment type="subunit">
    <text evidence="1">F-type ATPases have 2 components, CF(1) - the catalytic core - and CF(0) - the membrane proton channel. CF(1) has five subunits: alpha(3), beta(3), gamma(1), delta(1), epsilon(1). CF(0) has three main subunits: a, b and c.</text>
</comment>
<comment type="subcellular location">
    <subcellularLocation>
        <location evidence="1">Cell inner membrane</location>
        <topology evidence="1">Peripheral membrane protein</topology>
    </subcellularLocation>
</comment>
<comment type="similarity">
    <text evidence="1">Belongs to the ATPase gamma chain family.</text>
</comment>
<name>ATPG_COXBU</name>
<sequence length="289" mass="32614">MSKAREIRTKIASIKNTQKITRAMELVAASKMRKAQDRMAMSRPYASKIRKVISHVAASHAEYPHPYLQQRENIKRVGYIIVTTDRGLCGGLNVNLFRTAIADMKKWQADNIGMDLCVIGRKGEAFFRRYGGNVLAVADHLGDAPEVQDIIGIVKVMLDQYDKQQIDAIYIATNEFVNTMVQKPLVRQLLPLKTDEEEVEGGYWDYIYEPDESKDLLEMLLVRYIESQVYQAVIENIACEQSARMVAMKNATENAGQLIDELRLIYNKARQAGITREIAEIVAGAAAVE</sequence>
<organism>
    <name type="scientific">Coxiella burnetii (strain RSA 493 / Nine Mile phase I)</name>
    <dbReference type="NCBI Taxonomy" id="227377"/>
    <lineage>
        <taxon>Bacteria</taxon>
        <taxon>Pseudomonadati</taxon>
        <taxon>Pseudomonadota</taxon>
        <taxon>Gammaproteobacteria</taxon>
        <taxon>Legionellales</taxon>
        <taxon>Coxiellaceae</taxon>
        <taxon>Coxiella</taxon>
    </lineage>
</organism>